<name>ADCS_STRGR</name>
<accession>P32483</accession>
<accession>Q9EWC1</accession>
<keyword id="KW-0045">Antibiotic biosynthesis</keyword>
<keyword id="KW-0315">Glutamine amidotransferase</keyword>
<keyword id="KW-0511">Multifunctional enzyme</keyword>
<keyword id="KW-0808">Transferase</keyword>
<evidence type="ECO:0000250" key="1">
    <source>
        <dbReference type="UniProtKB" id="Q8LPN3"/>
    </source>
</evidence>
<evidence type="ECO:0000255" key="2">
    <source>
        <dbReference type="PROSITE-ProRule" id="PRU00605"/>
    </source>
</evidence>
<evidence type="ECO:0000256" key="3">
    <source>
        <dbReference type="SAM" id="MobiDB-lite"/>
    </source>
</evidence>
<evidence type="ECO:0000269" key="4">
    <source>
    </source>
</evidence>
<evidence type="ECO:0000303" key="5">
    <source>
    </source>
</evidence>
<evidence type="ECO:0000305" key="6"/>
<evidence type="ECO:0000305" key="7">
    <source>
    </source>
</evidence>
<proteinExistence type="inferred from homology"/>
<dbReference type="EC" id="2.6.1.85" evidence="1"/>
<dbReference type="EMBL" id="M93058">
    <property type="protein sequence ID" value="AAA72111.1"/>
    <property type="molecule type" value="Unassigned_DNA"/>
</dbReference>
<dbReference type="EMBL" id="AJ300302">
    <property type="protein sequence ID" value="CAC22117.1"/>
    <property type="molecule type" value="Genomic_DNA"/>
</dbReference>
<dbReference type="PIR" id="JN0531">
    <property type="entry name" value="JN0531"/>
</dbReference>
<dbReference type="SMR" id="P32483"/>
<dbReference type="MEROPS" id="C26.A25"/>
<dbReference type="BioCyc" id="MetaCyc:MONOMER-16235"/>
<dbReference type="UniPathway" id="UPA00101"/>
<dbReference type="GO" id="GO:0005737">
    <property type="term" value="C:cytoplasm"/>
    <property type="evidence" value="ECO:0007669"/>
    <property type="project" value="TreeGrafter"/>
</dbReference>
<dbReference type="GO" id="GO:0046820">
    <property type="term" value="F:4-amino-4-deoxychorismate synthase activity"/>
    <property type="evidence" value="ECO:0007669"/>
    <property type="project" value="UniProtKB-EC"/>
</dbReference>
<dbReference type="GO" id="GO:0008153">
    <property type="term" value="P:4-aminobenzoate biosynthetic process"/>
    <property type="evidence" value="ECO:0007669"/>
    <property type="project" value="TreeGrafter"/>
</dbReference>
<dbReference type="GO" id="GO:0017000">
    <property type="term" value="P:antibiotic biosynthetic process"/>
    <property type="evidence" value="ECO:0007669"/>
    <property type="project" value="UniProtKB-KW"/>
</dbReference>
<dbReference type="GO" id="GO:0009396">
    <property type="term" value="P:folic acid-containing compound biosynthetic process"/>
    <property type="evidence" value="ECO:0007669"/>
    <property type="project" value="InterPro"/>
</dbReference>
<dbReference type="GO" id="GO:0000162">
    <property type="term" value="P:L-tryptophan biosynthetic process"/>
    <property type="evidence" value="ECO:0007669"/>
    <property type="project" value="TreeGrafter"/>
</dbReference>
<dbReference type="CDD" id="cd01743">
    <property type="entry name" value="GATase1_Anthranilate_Synthase"/>
    <property type="match status" value="1"/>
</dbReference>
<dbReference type="FunFam" id="3.40.50.880:FF:000003">
    <property type="entry name" value="Anthranilate synthase component II"/>
    <property type="match status" value="1"/>
</dbReference>
<dbReference type="Gene3D" id="3.40.50.880">
    <property type="match status" value="1"/>
</dbReference>
<dbReference type="Gene3D" id="3.60.120.10">
    <property type="entry name" value="Anthranilate synthase"/>
    <property type="match status" value="1"/>
</dbReference>
<dbReference type="InterPro" id="IPR005802">
    <property type="entry name" value="ADC_synth_comp_1"/>
</dbReference>
<dbReference type="InterPro" id="IPR005801">
    <property type="entry name" value="ADC_synthase"/>
</dbReference>
<dbReference type="InterPro" id="IPR019999">
    <property type="entry name" value="Anth_synth_I-like"/>
</dbReference>
<dbReference type="InterPro" id="IPR006805">
    <property type="entry name" value="Anth_synth_I_N"/>
</dbReference>
<dbReference type="InterPro" id="IPR015890">
    <property type="entry name" value="Chorismate_C"/>
</dbReference>
<dbReference type="InterPro" id="IPR029062">
    <property type="entry name" value="Class_I_gatase-like"/>
</dbReference>
<dbReference type="InterPro" id="IPR017926">
    <property type="entry name" value="GATASE"/>
</dbReference>
<dbReference type="InterPro" id="IPR006221">
    <property type="entry name" value="TrpG/PapA_dom"/>
</dbReference>
<dbReference type="NCBIfam" id="TIGR00553">
    <property type="entry name" value="pabB"/>
    <property type="match status" value="1"/>
</dbReference>
<dbReference type="NCBIfam" id="TIGR00566">
    <property type="entry name" value="trpG_papA"/>
    <property type="match status" value="1"/>
</dbReference>
<dbReference type="PANTHER" id="PTHR11236">
    <property type="entry name" value="AMINOBENZOATE/ANTHRANILATE SYNTHASE"/>
    <property type="match status" value="1"/>
</dbReference>
<dbReference type="PANTHER" id="PTHR11236:SF18">
    <property type="entry name" value="AMINODEOXYCHORISMATE SYNTHASE"/>
    <property type="match status" value="1"/>
</dbReference>
<dbReference type="Pfam" id="PF04715">
    <property type="entry name" value="Anth_synt_I_N"/>
    <property type="match status" value="1"/>
</dbReference>
<dbReference type="Pfam" id="PF00425">
    <property type="entry name" value="Chorismate_bind"/>
    <property type="match status" value="1"/>
</dbReference>
<dbReference type="Pfam" id="PF00117">
    <property type="entry name" value="GATase"/>
    <property type="match status" value="1"/>
</dbReference>
<dbReference type="PRINTS" id="PR00097">
    <property type="entry name" value="ANTSNTHASEII"/>
</dbReference>
<dbReference type="PRINTS" id="PR00099">
    <property type="entry name" value="CPSGATASE"/>
</dbReference>
<dbReference type="PRINTS" id="PR00096">
    <property type="entry name" value="GATASE"/>
</dbReference>
<dbReference type="SUPFAM" id="SSF56322">
    <property type="entry name" value="ADC synthase"/>
    <property type="match status" value="1"/>
</dbReference>
<dbReference type="SUPFAM" id="SSF52317">
    <property type="entry name" value="Class I glutamine amidotransferase-like"/>
    <property type="match status" value="1"/>
</dbReference>
<dbReference type="PROSITE" id="PS51273">
    <property type="entry name" value="GATASE_TYPE_1"/>
    <property type="match status" value="1"/>
</dbReference>
<feature type="chain" id="PRO_0000154141" description="Aminodeoxychorismate synthase">
    <location>
        <begin position="1"/>
        <end position="723"/>
    </location>
</feature>
<feature type="domain" description="Glutamine amidotransferase type-1" evidence="2">
    <location>
        <begin position="2"/>
        <end position="195"/>
    </location>
</feature>
<feature type="region of interest" description="Disordered" evidence="3">
    <location>
        <begin position="96"/>
        <end position="117"/>
    </location>
</feature>
<feature type="region of interest" description="Disordered" evidence="3">
    <location>
        <begin position="192"/>
        <end position="219"/>
    </location>
</feature>
<feature type="region of interest" description="PABB component" evidence="6">
    <location>
        <begin position="255"/>
        <end position="723"/>
    </location>
</feature>
<feature type="region of interest" description="Disordered" evidence="3">
    <location>
        <begin position="693"/>
        <end position="723"/>
    </location>
</feature>
<feature type="compositionally biased region" description="Basic and acidic residues" evidence="3">
    <location>
        <begin position="98"/>
        <end position="114"/>
    </location>
</feature>
<feature type="compositionally biased region" description="Basic and acidic residues" evidence="3">
    <location>
        <begin position="695"/>
        <end position="704"/>
    </location>
</feature>
<feature type="active site" description="Nucleophile" evidence="2">
    <location>
        <position position="82"/>
    </location>
</feature>
<feature type="active site" evidence="2">
    <location>
        <position position="169"/>
    </location>
</feature>
<feature type="active site" evidence="2">
    <location>
        <position position="171"/>
    </location>
</feature>
<feature type="sequence conflict" description="In Ref. 2; CAC22117." evidence="6" ref="2">
    <original>R</original>
    <variation>A</variation>
    <location>
        <position position="698"/>
    </location>
</feature>
<protein>
    <recommendedName>
        <fullName evidence="6">Aminodeoxychorismate synthase</fullName>
        <shortName evidence="6">ADC synthase</shortName>
        <ecNumber evidence="1">2.6.1.85</ecNumber>
    </recommendedName>
    <alternativeName>
        <fullName evidence="6">4-amino-4-deoxychorismate synthase</fullName>
    </alternativeName>
    <alternativeName>
        <fullName evidence="5">p-aminobenzoic acid synthase</fullName>
        <shortName evidence="5">PABA synthase</shortName>
    </alternativeName>
</protein>
<comment type="function">
    <text evidence="1 4">Involved in candicidin biosynthesis (PubMed:11782498). Catalyzes the biosynthesis of 4-amino-4-deoxychorismate (ADC) from chorismate and glutamine (By similarity).</text>
</comment>
<comment type="catalytic activity">
    <reaction evidence="1">
        <text>chorismate + L-glutamine = 4-amino-4-deoxychorismate + L-glutamate</text>
        <dbReference type="Rhea" id="RHEA:11672"/>
        <dbReference type="ChEBI" id="CHEBI:29748"/>
        <dbReference type="ChEBI" id="CHEBI:29985"/>
        <dbReference type="ChEBI" id="CHEBI:58359"/>
        <dbReference type="ChEBI" id="CHEBI:58406"/>
        <dbReference type="EC" id="2.6.1.85"/>
    </reaction>
    <physiologicalReaction direction="left-to-right" evidence="7">
        <dbReference type="Rhea" id="RHEA:11673"/>
    </physiologicalReaction>
</comment>
<comment type="pathway">
    <text evidence="4">Antibiotic biosynthesis; candicidin biosynthesis.</text>
</comment>
<comment type="disruption phenotype">
    <text evidence="4">Disruption of the gene abolishes production of candicidin.</text>
</comment>
<comment type="similarity">
    <text evidence="6">In the C-terminal section; belongs to the anthranilate synthase component I family.</text>
</comment>
<reference key="1">
    <citation type="journal article" date="1993" name="Gene">
        <title>The pab gene of Streptomyces griseus, encoding p-aminobenzoic acid synthase, is located between genes possibly involved in candicidin biosynthesis.</title>
        <authorList>
            <person name="Criado L.M."/>
            <person name="Martin J.F."/>
            <person name="Gil J.A."/>
        </authorList>
    </citation>
    <scope>NUCLEOTIDE SEQUENCE [GENOMIC DNA]</scope>
    <source>
        <strain>IMRU 3570</strain>
    </source>
</reference>
<reference key="2">
    <citation type="journal article" date="2002" name="Microbiology">
        <title>The candicidin gene cluster from Streptomyces griseus IMRU 3570.</title>
        <authorList>
            <person name="Campelo A.B."/>
            <person name="Gil J.A."/>
        </authorList>
    </citation>
    <scope>NUCLEOTIDE SEQUENCE [GENOMIC DNA]</scope>
    <scope>FUNCTION</scope>
    <scope>PATHWAY</scope>
    <scope>DISRUPTION PHENOTYPE</scope>
    <source>
        <strain>IMRU 3570</strain>
    </source>
</reference>
<sequence length="723" mass="77901">MRTLLVDNYDSFTYNLFHYLSRANGREPEVIRNDDPAWRPGLLDAFDNVVLSPGPGTPHRPADFGLCARIAEEGRLPVLGVCLGHQGMALAHGARVGRAPEPRHGRTSAVRHDGTGLFEGLPQPLEVVRYHSLAVTELPPELEATAWSEDGVLMALRHRTLPLWGVQFHPESIGTQDGHRLLANFRDLTERHGRTRHGGRAGHGTLPPPAPARETKATTGTPRRLRVIAKSLPTRWDAEVAFDSLFRTGDHPFWLDSSRPGGELGQLSMMGDASGPLARTAKADVHAGTVTVRADGASSTVESAFLTWLENDLAGLRTEVPELPFAFALGWVGCLGYELKAECDGDAAHRSPDPDAVLVFADRALVLDHRTRTTYLLALVEDDAEAEARAWLAAASATLDAVAGREPEPCPEAPVCTTGPVELRHDRDGYLKLIDVCQQEIAAGETYEVCLTNMAEADTDLTPWAAYRALRRVSPAPFAAFLDFGPMAVLSSSPERFLRIDRHGRMESKPIKGTRPRGATPQEDAALVRALATCEKDRAENLMIVDLVRHDLGRCAEVGSVVADPVFQVETYATVHQLVSTVTARLREDSSPVAAVRAAFPGGSMTGAPKIRTMQIIDRLEGGPRGVYSGAIGYFSLTGAVDLSIVIRTVVLSGGRLRYGVGGAVIALSDPADEFEETAVKAAPLLRLLDTAFPGRERPGKDLDGEPDDGTDAGAPKDLVLPG</sequence>
<organism>
    <name type="scientific">Streptomyces griseus</name>
    <dbReference type="NCBI Taxonomy" id="1911"/>
    <lineage>
        <taxon>Bacteria</taxon>
        <taxon>Bacillati</taxon>
        <taxon>Actinomycetota</taxon>
        <taxon>Actinomycetes</taxon>
        <taxon>Kitasatosporales</taxon>
        <taxon>Streptomycetaceae</taxon>
        <taxon>Streptomyces</taxon>
    </lineage>
</organism>
<gene>
    <name evidence="5" type="primary">pabAB</name>
    <name evidence="5" type="synonym">pab</name>
</gene>